<comment type="function">
    <text evidence="1">Inhibits RpoS proteolysis by regulating RssB activity, thereby increasing the stability of the sigma stress factor RpoS especially during phosphate starvation, but also in stationary phase and during nitrogen starvation. Its effect on RpoS stability is due to its interaction with RssB, which probably blocks the interaction of RssB with RpoS, and the consequent delivery of the RssB-RpoS complex to the ClpXP protein degradation pathway.</text>
</comment>
<comment type="subunit">
    <text evidence="1">Interacts with RssB.</text>
</comment>
<comment type="subcellular location">
    <subcellularLocation>
        <location evidence="1">Cytoplasm</location>
    </subcellularLocation>
</comment>
<comment type="similarity">
    <text evidence="1">Belongs to the IraP family.</text>
</comment>
<reference key="1">
    <citation type="journal article" date="2008" name="PLoS Genet.">
        <title>Complete genome sequence of the N2-fixing broad host range endophyte Klebsiella pneumoniae 342 and virulence predictions verified in mice.</title>
        <authorList>
            <person name="Fouts D.E."/>
            <person name="Tyler H.L."/>
            <person name="DeBoy R.T."/>
            <person name="Daugherty S."/>
            <person name="Ren Q."/>
            <person name="Badger J.H."/>
            <person name="Durkin A.S."/>
            <person name="Huot H."/>
            <person name="Shrivastava S."/>
            <person name="Kothari S."/>
            <person name="Dodson R.J."/>
            <person name="Mohamoud Y."/>
            <person name="Khouri H."/>
            <person name="Roesch L.F.W."/>
            <person name="Krogfelt K.A."/>
            <person name="Struve C."/>
            <person name="Triplett E.W."/>
            <person name="Methe B.A."/>
        </authorList>
    </citation>
    <scope>NUCLEOTIDE SEQUENCE [LARGE SCALE GENOMIC DNA]</scope>
    <source>
        <strain>342</strain>
    </source>
</reference>
<protein>
    <recommendedName>
        <fullName evidence="1">Anti-adapter protein IraP</fullName>
    </recommendedName>
</protein>
<feature type="chain" id="PRO_1000138489" description="Anti-adapter protein IraP">
    <location>
        <begin position="1"/>
        <end position="86"/>
    </location>
</feature>
<feature type="coiled-coil region" evidence="1">
    <location>
        <begin position="1"/>
        <end position="38"/>
    </location>
</feature>
<evidence type="ECO:0000255" key="1">
    <source>
        <dbReference type="HAMAP-Rule" id="MF_01198"/>
    </source>
</evidence>
<proteinExistence type="inferred from homology"/>
<gene>
    <name evidence="1" type="primary">iraP</name>
    <name type="ordered locus">KPK_4360</name>
</gene>
<name>IRAP_KLEP3</name>
<organism>
    <name type="scientific">Klebsiella pneumoniae (strain 342)</name>
    <dbReference type="NCBI Taxonomy" id="507522"/>
    <lineage>
        <taxon>Bacteria</taxon>
        <taxon>Pseudomonadati</taxon>
        <taxon>Pseudomonadota</taxon>
        <taxon>Gammaproteobacteria</taxon>
        <taxon>Enterobacterales</taxon>
        <taxon>Enterobacteriaceae</taxon>
        <taxon>Klebsiella/Raoultella group</taxon>
        <taxon>Klebsiella</taxon>
        <taxon>Klebsiella pneumoniae complex</taxon>
    </lineage>
</organism>
<accession>B5Y119</accession>
<sequence length="86" mass="9836">MKNLIAELLVKLAQKEEEAKELTVQVEALEIVVTALLRHMEHDAQQALIQDIEQAIDQVTPCPPVNDQDAMLLQQYLKKLLRHPRS</sequence>
<keyword id="KW-0175">Coiled coil</keyword>
<keyword id="KW-0963">Cytoplasm</keyword>
<keyword id="KW-0346">Stress response</keyword>
<dbReference type="EMBL" id="CP000964">
    <property type="protein sequence ID" value="ACI09830.1"/>
    <property type="molecule type" value="Genomic_DNA"/>
</dbReference>
<dbReference type="SMR" id="B5Y119"/>
<dbReference type="KEGG" id="kpe:KPK_4360"/>
<dbReference type="HOGENOM" id="CLU_169517_0_0_6"/>
<dbReference type="Proteomes" id="UP000001734">
    <property type="component" value="Chromosome"/>
</dbReference>
<dbReference type="GO" id="GO:0005737">
    <property type="term" value="C:cytoplasm"/>
    <property type="evidence" value="ECO:0007669"/>
    <property type="project" value="UniProtKB-SubCell"/>
</dbReference>
<dbReference type="GO" id="GO:0009267">
    <property type="term" value="P:cellular response to starvation"/>
    <property type="evidence" value="ECO:0007669"/>
    <property type="project" value="UniProtKB-UniRule"/>
</dbReference>
<dbReference type="HAMAP" id="MF_01198">
    <property type="entry name" value="Anti_adapt_IraP"/>
    <property type="match status" value="1"/>
</dbReference>
<dbReference type="InterPro" id="IPR019732">
    <property type="entry name" value="SigmaS_Anti-adapt_IraP"/>
</dbReference>
<dbReference type="NCBIfam" id="NF007598">
    <property type="entry name" value="PRK10244.1"/>
    <property type="match status" value="1"/>
</dbReference>
<dbReference type="Pfam" id="PF10796">
    <property type="entry name" value="Anti-adapt_IraP"/>
    <property type="match status" value="1"/>
</dbReference>